<organism>
    <name type="scientific">Mus musculus</name>
    <name type="common">Mouse</name>
    <dbReference type="NCBI Taxonomy" id="10090"/>
    <lineage>
        <taxon>Eukaryota</taxon>
        <taxon>Metazoa</taxon>
        <taxon>Chordata</taxon>
        <taxon>Craniata</taxon>
        <taxon>Vertebrata</taxon>
        <taxon>Euteleostomi</taxon>
        <taxon>Mammalia</taxon>
        <taxon>Eutheria</taxon>
        <taxon>Euarchontoglires</taxon>
        <taxon>Glires</taxon>
        <taxon>Rodentia</taxon>
        <taxon>Myomorpha</taxon>
        <taxon>Muroidea</taxon>
        <taxon>Muridae</taxon>
        <taxon>Murinae</taxon>
        <taxon>Mus</taxon>
        <taxon>Mus</taxon>
    </lineage>
</organism>
<name>OBOX7_MOUSE</name>
<proteinExistence type="evidence at transcript level"/>
<protein>
    <recommendedName>
        <fullName evidence="4">Oocyte-specific homeobox protein 7</fullName>
    </recommendedName>
</protein>
<gene>
    <name evidence="5" type="primary">Obox7</name>
    <name evidence="5" type="synonym">Gm4745</name>
</gene>
<evidence type="ECO:0000255" key="1">
    <source>
        <dbReference type="PROSITE-ProRule" id="PRU00108"/>
    </source>
</evidence>
<evidence type="ECO:0000256" key="2">
    <source>
        <dbReference type="SAM" id="MobiDB-lite"/>
    </source>
</evidence>
<evidence type="ECO:0000269" key="3">
    <source>
    </source>
</evidence>
<evidence type="ECO:0000305" key="4"/>
<evidence type="ECO:0000312" key="5">
    <source>
        <dbReference type="MGI" id="MGI:3646231"/>
    </source>
</evidence>
<comment type="function">
    <text evidence="3">Transcription factor required for zygotic genome activation (ZGA), a critical event in early embryonic development during which the developmental control passes from maternally provided mRNAs to the expression of the zygotic genome after fertilization (PubMed:37459895). Together with other Obox family members, required in early two-cell stage embryos to kick-start the major ZGA wave by facilitating RNA Polymerase II 'pre-configuration', during which RNA Polymerase II relocates from the initial one-cell stage binding targets to ZGA gene promoters and distal enhancers (PubMed:37459895). Mechanistically, promotes recruitment of RNA Polymerase II from (CG-rich) non-ZGA genes to (CG-poor) ZGA genes at the two-cell stage (PubMed:37459895). Binds to regulatory DNA sequences containing a 5'-ACNCCTTTAATCCCAG-3' sequence motif (PubMed:37459895). Most maternal and zygotic Obox family proteins can compensate for one another (PubMed:37459895).</text>
</comment>
<comment type="subcellular location">
    <subcellularLocation>
        <location evidence="1">Nucleus</location>
    </subcellularLocation>
</comment>
<comment type="tissue specificity">
    <text evidence="3">Specifically expressed in oocytes and early embryos.</text>
</comment>
<comment type="developmental stage">
    <text evidence="3">Expressed maternally with high expression in oocytes and early embryos before expression declines after zygotic genome activation (ZGA).</text>
</comment>
<comment type="disruption phenotype">
    <text evidence="3">No visible phenotype; mice are viable and fertile (PubMed:37459895). Female mice lacking maternally transcribed Obox1, Obox2, Obox5, Obox7 as well as zygotically expressed Obox3 and Obox4 are infertile: embryos arrest at two-four cell stage due to impaired zygotic genome activation (ZGA) (PubMed:37459895).</text>
</comment>
<comment type="similarity">
    <text evidence="4">Belongs to the paired homeobox family. Obox subfamily.</text>
</comment>
<dbReference type="EMBL" id="BC099488">
    <property type="protein sequence ID" value="AAH99488.1"/>
    <property type="molecule type" value="mRNA"/>
</dbReference>
<dbReference type="CCDS" id="CCDS39775.1"/>
<dbReference type="RefSeq" id="NP_001033765.1">
    <property type="nucleotide sequence ID" value="NM_001038676.1"/>
</dbReference>
<dbReference type="SMR" id="Q4KL20"/>
<dbReference type="FunCoup" id="Q4KL20">
    <property type="interactions" value="5"/>
</dbReference>
<dbReference type="STRING" id="10090.ENSMUSP00000138932"/>
<dbReference type="GlyGen" id="Q4KL20">
    <property type="glycosylation" value="1 site"/>
</dbReference>
<dbReference type="PaxDb" id="10090-ENSMUSP00000138932"/>
<dbReference type="ProteomicsDB" id="330615"/>
<dbReference type="DNASU" id="194588"/>
<dbReference type="Ensembl" id="ENSMUST00000069740.14">
    <property type="protein sequence ID" value="ENSMUSP00000069239.7"/>
    <property type="gene ID" value="ENSMUSG00000055942.14"/>
</dbReference>
<dbReference type="Ensembl" id="ENSMUST00000183788.8">
    <property type="protein sequence ID" value="ENSMUSP00000138932.2"/>
    <property type="gene ID" value="ENSMUSG00000055942.14"/>
</dbReference>
<dbReference type="GeneID" id="194588"/>
<dbReference type="KEGG" id="mmu:194588"/>
<dbReference type="UCSC" id="uc009fge.1">
    <property type="organism name" value="mouse"/>
</dbReference>
<dbReference type="AGR" id="MGI:3646231"/>
<dbReference type="CTD" id="194588"/>
<dbReference type="MGI" id="MGI:3646231">
    <property type="gene designation" value="Obox7"/>
</dbReference>
<dbReference type="VEuPathDB" id="HostDB:ENSMUSG00000055942"/>
<dbReference type="eggNOG" id="KOG0850">
    <property type="taxonomic scope" value="Eukaryota"/>
</dbReference>
<dbReference type="GeneTree" id="ENSGT00390000000605"/>
<dbReference type="HOGENOM" id="CLU_129629_0_0_1"/>
<dbReference type="OrthoDB" id="9622713at2759"/>
<dbReference type="TreeFam" id="TF339053"/>
<dbReference type="BioGRID-ORCS" id="194588">
    <property type="hits" value="2 hits in 47 CRISPR screens"/>
</dbReference>
<dbReference type="ChiTaRS" id="Obox7">
    <property type="organism name" value="mouse"/>
</dbReference>
<dbReference type="PRO" id="PR:Q4KL20"/>
<dbReference type="Proteomes" id="UP000000589">
    <property type="component" value="Chromosome 7"/>
</dbReference>
<dbReference type="RNAct" id="Q4KL20">
    <property type="molecule type" value="protein"/>
</dbReference>
<dbReference type="Bgee" id="ENSMUSG00000055942">
    <property type="expression patterns" value="Expressed in animal zygote and 5 other cell types or tissues"/>
</dbReference>
<dbReference type="ExpressionAtlas" id="Q4KL20">
    <property type="expression patterns" value="baseline and differential"/>
</dbReference>
<dbReference type="GO" id="GO:0005634">
    <property type="term" value="C:nucleus"/>
    <property type="evidence" value="ECO:0007669"/>
    <property type="project" value="UniProtKB-SubCell"/>
</dbReference>
<dbReference type="GO" id="GO:0003677">
    <property type="term" value="F:DNA binding"/>
    <property type="evidence" value="ECO:0007669"/>
    <property type="project" value="UniProtKB-KW"/>
</dbReference>
<dbReference type="GO" id="GO:0000981">
    <property type="term" value="F:DNA-binding transcription factor activity, RNA polymerase II-specific"/>
    <property type="evidence" value="ECO:0000315"/>
    <property type="project" value="UniProtKB"/>
</dbReference>
<dbReference type="GO" id="GO:0160021">
    <property type="term" value="P:maternal-to-zygotic transition of gene expression"/>
    <property type="evidence" value="ECO:0000315"/>
    <property type="project" value="UniProtKB"/>
</dbReference>
<dbReference type="CDD" id="cd00086">
    <property type="entry name" value="homeodomain"/>
    <property type="match status" value="1"/>
</dbReference>
<dbReference type="Gene3D" id="1.10.10.60">
    <property type="entry name" value="Homeodomain-like"/>
    <property type="match status" value="1"/>
</dbReference>
<dbReference type="InterPro" id="IPR050460">
    <property type="entry name" value="Distal-less_Homeobox_TF"/>
</dbReference>
<dbReference type="InterPro" id="IPR001356">
    <property type="entry name" value="HD"/>
</dbReference>
<dbReference type="InterPro" id="IPR017970">
    <property type="entry name" value="Homeobox_CS"/>
</dbReference>
<dbReference type="InterPro" id="IPR009057">
    <property type="entry name" value="Homeodomain-like_sf"/>
</dbReference>
<dbReference type="PANTHER" id="PTHR24327">
    <property type="entry name" value="HOMEOBOX PROTEIN"/>
    <property type="match status" value="1"/>
</dbReference>
<dbReference type="PANTHER" id="PTHR24327:SF87">
    <property type="entry name" value="OBOX1-RELATED"/>
    <property type="match status" value="1"/>
</dbReference>
<dbReference type="Pfam" id="PF00046">
    <property type="entry name" value="Homeodomain"/>
    <property type="match status" value="1"/>
</dbReference>
<dbReference type="SMART" id="SM00389">
    <property type="entry name" value="HOX"/>
    <property type="match status" value="1"/>
</dbReference>
<dbReference type="SUPFAM" id="SSF46689">
    <property type="entry name" value="Homeodomain-like"/>
    <property type="match status" value="1"/>
</dbReference>
<dbReference type="PROSITE" id="PS00027">
    <property type="entry name" value="HOMEOBOX_1"/>
    <property type="match status" value="1"/>
</dbReference>
<dbReference type="PROSITE" id="PS50071">
    <property type="entry name" value="HOMEOBOX_2"/>
    <property type="match status" value="1"/>
</dbReference>
<sequence length="218" mass="24340">MAEGPSLHPKLQVASNIPIEISSQIPQELAKNLPFQMSQSPLVTPGSTMQSSLSVPERNLLQQESEGPSRQSGCMPLSDKYVNKQTGLLASRNFRKERIVYSKEQQRLLQKHFDECQYPKEKKIVELAVLIGVTKMEIKKWFKNNRAKYRQMNLQNIKQALPESNGSSKAVSESTHFPGSIPVVASDNGESICSGTFGEDSIPKFNCSQESSLYCFQA</sequence>
<reference key="1">
    <citation type="journal article" date="2009" name="PLoS Biol.">
        <title>Lineage-specific biology revealed by a finished genome assembly of the mouse.</title>
        <authorList>
            <person name="Church D.M."/>
            <person name="Goodstadt L."/>
            <person name="Hillier L.W."/>
            <person name="Zody M.C."/>
            <person name="Goldstein S."/>
            <person name="She X."/>
            <person name="Bult C.J."/>
            <person name="Agarwala R."/>
            <person name="Cherry J.L."/>
            <person name="DiCuccio M."/>
            <person name="Hlavina W."/>
            <person name="Kapustin Y."/>
            <person name="Meric P."/>
            <person name="Maglott D."/>
            <person name="Birtle Z."/>
            <person name="Marques A.C."/>
            <person name="Graves T."/>
            <person name="Zhou S."/>
            <person name="Teague B."/>
            <person name="Potamousis K."/>
            <person name="Churas C."/>
            <person name="Place M."/>
            <person name="Herschleb J."/>
            <person name="Runnheim R."/>
            <person name="Forrest D."/>
            <person name="Amos-Landgraf J."/>
            <person name="Schwartz D.C."/>
            <person name="Cheng Z."/>
            <person name="Lindblad-Toh K."/>
            <person name="Eichler E.E."/>
            <person name="Ponting C.P."/>
        </authorList>
    </citation>
    <scope>NUCLEOTIDE SEQUENCE [LARGE SCALE GENOMIC DNA]</scope>
    <source>
        <strain>C57BL/6J</strain>
    </source>
</reference>
<reference key="2">
    <citation type="journal article" date="2004" name="Genome Res.">
        <title>The status, quality, and expansion of the NIH full-length cDNA project: the Mammalian Gene Collection (MGC).</title>
        <authorList>
            <consortium name="The MGC Project Team"/>
        </authorList>
    </citation>
    <scope>NUCLEOTIDE SEQUENCE [LARGE SCALE MRNA]</scope>
    <source>
        <tissue>Oocyte</tissue>
    </source>
</reference>
<reference key="3">
    <citation type="journal article" date="2023" name="Nature">
        <title>OBOX regulates murine zygotic genome activation and early development.</title>
        <authorList>
            <person name="Ji S."/>
            <person name="Chen F."/>
            <person name="Stein P."/>
            <person name="Wang J."/>
            <person name="Zhou Z."/>
            <person name="Wang L."/>
            <person name="Zhao Q."/>
            <person name="Lin Z."/>
            <person name="Liu B."/>
            <person name="Xu K."/>
            <person name="Lai F."/>
            <person name="Xiong Z."/>
            <person name="Hu X."/>
            <person name="Kong T."/>
            <person name="Kong F."/>
            <person name="Huang B."/>
            <person name="Wang Q."/>
            <person name="Xu Q."/>
            <person name="Fan Q."/>
            <person name="Liu L."/>
            <person name="Williams C.J."/>
            <person name="Schultz R.M."/>
            <person name="Xie W."/>
        </authorList>
    </citation>
    <scope>FUNCTION</scope>
    <scope>TISSUE SPECIFICITY</scope>
    <scope>DEVELOPMENTAL STAGE</scope>
    <scope>DISRUPTION PHENOTYPE</scope>
</reference>
<keyword id="KW-0217">Developmental protein</keyword>
<keyword id="KW-0238">DNA-binding</keyword>
<keyword id="KW-0371">Homeobox</keyword>
<keyword id="KW-0539">Nucleus</keyword>
<keyword id="KW-1185">Reference proteome</keyword>
<keyword id="KW-0804">Transcription</keyword>
<keyword id="KW-0805">Transcription regulation</keyword>
<feature type="chain" id="PRO_0000459216" description="Oocyte-specific homeobox protein 7">
    <location>
        <begin position="1"/>
        <end position="218"/>
    </location>
</feature>
<feature type="DNA-binding region" description="Homeobox" evidence="1">
    <location>
        <begin position="94"/>
        <end position="153"/>
    </location>
</feature>
<feature type="region of interest" description="Disordered" evidence="2">
    <location>
        <begin position="40"/>
        <end position="77"/>
    </location>
</feature>
<feature type="compositionally biased region" description="Polar residues" evidence="2">
    <location>
        <begin position="40"/>
        <end position="72"/>
    </location>
</feature>
<accession>Q4KL20</accession>
<accession>V9GWX2</accession>